<name>TX2C_POGRU</name>
<protein>
    <recommendedName>
        <fullName evidence="5">Myrmicitoxin(1)-Pr2c</fullName>
        <shortName evidence="5">MYRTX(1)-Pr2c</shortName>
    </recommendedName>
</protein>
<evidence type="ECO:0000250" key="1">
    <source>
        <dbReference type="UniProtKB" id="A0A8U0LTF0"/>
    </source>
</evidence>
<evidence type="ECO:0000250" key="2">
    <source>
        <dbReference type="UniProtKB" id="P0DRD0"/>
    </source>
</evidence>
<evidence type="ECO:0000250" key="3">
    <source>
        <dbReference type="UniProtKB" id="P0DX61"/>
    </source>
</evidence>
<evidence type="ECO:0000255" key="4"/>
<evidence type="ECO:0000303" key="5">
    <source>
    </source>
</evidence>
<evidence type="ECO:0000305" key="6"/>
<evidence type="ECO:0000305" key="7">
    <source>
    </source>
</evidence>
<comment type="function">
    <text evidence="1 2 3">Vertebrate-selective toxin that causes pain by targeting voltage-gated sodium channels.</text>
</comment>
<comment type="subcellular location">
    <subcellularLocation>
        <location evidence="7">Secreted</location>
    </subcellularLocation>
</comment>
<comment type="tissue specificity">
    <text evidence="7">Expressed by the venom gland.</text>
</comment>
<comment type="similarity">
    <text evidence="6">Belongs to the formicidae venom clade 1 family.</text>
</comment>
<reference key="1">
    <citation type="journal article" date="2024" name="J. Biol. Chem.">
        <title>Peptide toxins that target vertebrate voltage-gated sodium channels underly the painful stings of harvester ants.</title>
        <authorList>
            <person name="Robinson S.D."/>
            <person name="Deuis J.R."/>
            <person name="Niu P."/>
            <person name="Touchard A."/>
            <person name="Mueller A."/>
            <person name="Schendel V."/>
            <person name="Brinkwirth N."/>
            <person name="King G.F."/>
            <person name="Vetter I."/>
            <person name="Schmidt J.O."/>
        </authorList>
    </citation>
    <scope>NUCLEOTIDE SEQUENCE [MRNA]</scope>
    <scope>PROBABLE AMIDATION AT ASN-88</scope>
    <source>
        <tissue>Venom gland</tissue>
    </source>
</reference>
<accession>P0DXT4</accession>
<proteinExistence type="evidence at protein level"/>
<dbReference type="EMBL" id="OR128476">
    <property type="protein sequence ID" value="WMI02514.1"/>
    <property type="molecule type" value="mRNA"/>
</dbReference>
<dbReference type="GO" id="GO:0005576">
    <property type="term" value="C:extracellular region"/>
    <property type="evidence" value="ECO:0007669"/>
    <property type="project" value="UniProtKB-SubCell"/>
</dbReference>
<dbReference type="GO" id="GO:0017080">
    <property type="term" value="F:sodium channel regulator activity"/>
    <property type="evidence" value="ECO:0007669"/>
    <property type="project" value="UniProtKB-KW"/>
</dbReference>
<dbReference type="GO" id="GO:0090729">
    <property type="term" value="F:toxin activity"/>
    <property type="evidence" value="ECO:0007669"/>
    <property type="project" value="UniProtKB-KW"/>
</dbReference>
<organism>
    <name type="scientific">Pogonomyrmex rugosus</name>
    <name type="common">Desert harvester ant</name>
    <dbReference type="NCBI Taxonomy" id="144042"/>
    <lineage>
        <taxon>Eukaryota</taxon>
        <taxon>Metazoa</taxon>
        <taxon>Ecdysozoa</taxon>
        <taxon>Arthropoda</taxon>
        <taxon>Hexapoda</taxon>
        <taxon>Insecta</taxon>
        <taxon>Pterygota</taxon>
        <taxon>Neoptera</taxon>
        <taxon>Endopterygota</taxon>
        <taxon>Hymenoptera</taxon>
        <taxon>Apocrita</taxon>
        <taxon>Aculeata</taxon>
        <taxon>Formicoidea</taxon>
        <taxon>Formicidae</taxon>
        <taxon>Myrmicinae</taxon>
        <taxon>Pogonomyrmex</taxon>
    </lineage>
</organism>
<keyword id="KW-0027">Amidation</keyword>
<keyword id="KW-0872">Ion channel impairing toxin</keyword>
<keyword id="KW-0528">Neurotoxin</keyword>
<keyword id="KW-0964">Secreted</keyword>
<keyword id="KW-0732">Signal</keyword>
<keyword id="KW-0800">Toxin</keyword>
<keyword id="KW-0738">Voltage-gated sodium channel impairing toxin</keyword>
<feature type="signal peptide" evidence="4">
    <location>
        <begin position="1"/>
        <end position="23"/>
    </location>
</feature>
<feature type="propeptide" id="PRO_0000461247" evidence="7">
    <location>
        <begin position="24"/>
        <end position="61"/>
    </location>
</feature>
<feature type="peptide" id="PRO_0000461248" description="Myrmicitoxin(1)-Pr2c" evidence="7">
    <location>
        <begin position="62"/>
        <end position="88"/>
    </location>
</feature>
<feature type="modified residue" description="Asparagine amide" evidence="7">
    <location>
        <position position="88"/>
    </location>
</feature>
<sequence length="89" mass="9358">MEIPKLLYIAVIAIGLSGSLTCATPLANPWADPEAEANPKAKATAEATAEAIAEALAEPEPALPALPLLAFLFSLPAVQHWIEKNWING</sequence>